<keyword id="KW-0066">ATP synthesis</keyword>
<keyword id="KW-0997">Cell inner membrane</keyword>
<keyword id="KW-1003">Cell membrane</keyword>
<keyword id="KW-0139">CF(1)</keyword>
<keyword id="KW-0375">Hydrogen ion transport</keyword>
<keyword id="KW-0406">Ion transport</keyword>
<keyword id="KW-0472">Membrane</keyword>
<keyword id="KW-0813">Transport</keyword>
<comment type="function">
    <text evidence="1">Produces ATP from ADP in the presence of a proton gradient across the membrane. The gamma chain is believed to be important in regulating ATPase activity and the flow of protons through the CF(0) complex.</text>
</comment>
<comment type="subunit">
    <text evidence="1">F-type ATPases have 2 components, CF(1) - the catalytic core - and CF(0) - the membrane proton channel. CF(1) has five subunits: alpha(3), beta(3), gamma(1), delta(1), epsilon(1). CF(0) has three main subunits: a, b and c.</text>
</comment>
<comment type="subcellular location">
    <subcellularLocation>
        <location evidence="1">Cell inner membrane</location>
        <topology evidence="1">Peripheral membrane protein</topology>
    </subcellularLocation>
</comment>
<comment type="similarity">
    <text evidence="1">Belongs to the ATPase gamma chain family.</text>
</comment>
<sequence>MPSLKDLKNRIGSVKNTRKITKAMQMVAAAKLRRAQEAAEAARPFAERMTAVMTGLAGSVGSSESAPRLLAGTGSDKVHLLVVMTAERGLCGGFNSSIVRLARAHAAKLLTQGKTVKILTVGKKGREQLRRDLGQHFIGHVDLSEVKRMGYPVAQGIARDLLDRFDKGEFDVATIFFARFQSVISQVPTAQQVIPAVFEGEGEVSSLYDYEPSEEGVLADLLPRGVATQIFTALLENGASEQGARMSAMDNATRNAGDMINRLTIEYNRSRQAAITKELIEIISGAEAL</sequence>
<name>ATPG_CERS1</name>
<accession>A3PIB8</accession>
<evidence type="ECO:0000255" key="1">
    <source>
        <dbReference type="HAMAP-Rule" id="MF_00815"/>
    </source>
</evidence>
<reference key="1">
    <citation type="submission" date="2007-02" db="EMBL/GenBank/DDBJ databases">
        <title>Complete sequence of chromosome 1 of Rhodobacter sphaeroides ATCC 17029.</title>
        <authorList>
            <person name="Copeland A."/>
            <person name="Lucas S."/>
            <person name="Lapidus A."/>
            <person name="Barry K."/>
            <person name="Detter J.C."/>
            <person name="Glavina del Rio T."/>
            <person name="Hammon N."/>
            <person name="Israni S."/>
            <person name="Dalin E."/>
            <person name="Tice H."/>
            <person name="Pitluck S."/>
            <person name="Kiss H."/>
            <person name="Brettin T."/>
            <person name="Bruce D."/>
            <person name="Han C."/>
            <person name="Tapia R."/>
            <person name="Gilna P."/>
            <person name="Schmutz J."/>
            <person name="Larimer F."/>
            <person name="Land M."/>
            <person name="Hauser L."/>
            <person name="Kyrpides N."/>
            <person name="Mikhailova N."/>
            <person name="Richardson P."/>
            <person name="Mackenzie C."/>
            <person name="Choudhary M."/>
            <person name="Donohue T.J."/>
            <person name="Kaplan S."/>
        </authorList>
    </citation>
    <scope>NUCLEOTIDE SEQUENCE [LARGE SCALE GENOMIC DNA]</scope>
    <source>
        <strain>ATCC 17029 / ATH 2.4.9</strain>
    </source>
</reference>
<proteinExistence type="inferred from homology"/>
<protein>
    <recommendedName>
        <fullName evidence="1">ATP synthase gamma chain</fullName>
    </recommendedName>
    <alternativeName>
        <fullName evidence="1">ATP synthase F1 sector gamma subunit</fullName>
    </alternativeName>
    <alternativeName>
        <fullName evidence="1">F-ATPase gamma subunit</fullName>
    </alternativeName>
</protein>
<gene>
    <name evidence="1" type="primary">atpG</name>
    <name type="ordered locus">Rsph17029_0973</name>
</gene>
<organism>
    <name type="scientific">Cereibacter sphaeroides (strain ATCC 17029 / ATH 2.4.9)</name>
    <name type="common">Rhodobacter sphaeroides</name>
    <dbReference type="NCBI Taxonomy" id="349101"/>
    <lineage>
        <taxon>Bacteria</taxon>
        <taxon>Pseudomonadati</taxon>
        <taxon>Pseudomonadota</taxon>
        <taxon>Alphaproteobacteria</taxon>
        <taxon>Rhodobacterales</taxon>
        <taxon>Paracoccaceae</taxon>
        <taxon>Cereibacter</taxon>
    </lineage>
</organism>
<dbReference type="EMBL" id="CP000577">
    <property type="protein sequence ID" value="ABN76084.1"/>
    <property type="molecule type" value="Genomic_DNA"/>
</dbReference>
<dbReference type="RefSeq" id="WP_002719461.1">
    <property type="nucleotide sequence ID" value="NC_009049.1"/>
</dbReference>
<dbReference type="SMR" id="A3PIB8"/>
<dbReference type="KEGG" id="rsh:Rsph17029_0973"/>
<dbReference type="HOGENOM" id="CLU_050669_0_1_5"/>
<dbReference type="GO" id="GO:0005886">
    <property type="term" value="C:plasma membrane"/>
    <property type="evidence" value="ECO:0007669"/>
    <property type="project" value="UniProtKB-SubCell"/>
</dbReference>
<dbReference type="GO" id="GO:0045259">
    <property type="term" value="C:proton-transporting ATP synthase complex"/>
    <property type="evidence" value="ECO:0007669"/>
    <property type="project" value="UniProtKB-KW"/>
</dbReference>
<dbReference type="GO" id="GO:0005524">
    <property type="term" value="F:ATP binding"/>
    <property type="evidence" value="ECO:0007669"/>
    <property type="project" value="UniProtKB-UniRule"/>
</dbReference>
<dbReference type="GO" id="GO:0046933">
    <property type="term" value="F:proton-transporting ATP synthase activity, rotational mechanism"/>
    <property type="evidence" value="ECO:0007669"/>
    <property type="project" value="UniProtKB-UniRule"/>
</dbReference>
<dbReference type="GO" id="GO:0042777">
    <property type="term" value="P:proton motive force-driven plasma membrane ATP synthesis"/>
    <property type="evidence" value="ECO:0007669"/>
    <property type="project" value="UniProtKB-UniRule"/>
</dbReference>
<dbReference type="CDD" id="cd12151">
    <property type="entry name" value="F1-ATPase_gamma"/>
    <property type="match status" value="1"/>
</dbReference>
<dbReference type="FunFam" id="1.10.287.80:FF:000001">
    <property type="entry name" value="ATP synthase gamma chain"/>
    <property type="match status" value="1"/>
</dbReference>
<dbReference type="FunFam" id="1.10.287.80:FF:000003">
    <property type="entry name" value="ATP synthase gamma chain, chloroplastic"/>
    <property type="match status" value="1"/>
</dbReference>
<dbReference type="Gene3D" id="3.40.1380.10">
    <property type="match status" value="1"/>
</dbReference>
<dbReference type="Gene3D" id="1.10.287.80">
    <property type="entry name" value="ATP synthase, gamma subunit, helix hairpin domain"/>
    <property type="match status" value="1"/>
</dbReference>
<dbReference type="HAMAP" id="MF_00815">
    <property type="entry name" value="ATP_synth_gamma_bact"/>
    <property type="match status" value="1"/>
</dbReference>
<dbReference type="InterPro" id="IPR035968">
    <property type="entry name" value="ATP_synth_F1_ATPase_gsu"/>
</dbReference>
<dbReference type="InterPro" id="IPR000131">
    <property type="entry name" value="ATP_synth_F1_gsu"/>
</dbReference>
<dbReference type="InterPro" id="IPR023632">
    <property type="entry name" value="ATP_synth_F1_gsu_CS"/>
</dbReference>
<dbReference type="NCBIfam" id="TIGR01146">
    <property type="entry name" value="ATPsyn_F1gamma"/>
    <property type="match status" value="1"/>
</dbReference>
<dbReference type="NCBIfam" id="NF004146">
    <property type="entry name" value="PRK05621.1-4"/>
    <property type="match status" value="1"/>
</dbReference>
<dbReference type="PANTHER" id="PTHR11693">
    <property type="entry name" value="ATP SYNTHASE GAMMA CHAIN"/>
    <property type="match status" value="1"/>
</dbReference>
<dbReference type="PANTHER" id="PTHR11693:SF22">
    <property type="entry name" value="ATP SYNTHASE SUBUNIT GAMMA, MITOCHONDRIAL"/>
    <property type="match status" value="1"/>
</dbReference>
<dbReference type="Pfam" id="PF00231">
    <property type="entry name" value="ATP-synt"/>
    <property type="match status" value="1"/>
</dbReference>
<dbReference type="PIRSF" id="PIRSF039089">
    <property type="entry name" value="ATP_synthase_gamma"/>
    <property type="match status" value="1"/>
</dbReference>
<dbReference type="PRINTS" id="PR00126">
    <property type="entry name" value="ATPASEGAMMA"/>
</dbReference>
<dbReference type="SUPFAM" id="SSF52943">
    <property type="entry name" value="ATP synthase (F1-ATPase), gamma subunit"/>
    <property type="match status" value="1"/>
</dbReference>
<dbReference type="PROSITE" id="PS00153">
    <property type="entry name" value="ATPASE_GAMMA"/>
    <property type="match status" value="1"/>
</dbReference>
<feature type="chain" id="PRO_1000053309" description="ATP synthase gamma chain">
    <location>
        <begin position="1"/>
        <end position="289"/>
    </location>
</feature>